<reference key="1">
    <citation type="journal article" date="2004" name="Plant Physiol.">
        <title>Molecular analyses of the Arabidopsis TUBBY-like protein gene family.</title>
        <authorList>
            <person name="Lai C.-P."/>
            <person name="Lee C.-L."/>
            <person name="Chen P.-H."/>
            <person name="Wu S.-H."/>
            <person name="Yang C.-C."/>
            <person name="Shaw J.-F."/>
        </authorList>
    </citation>
    <scope>NUCLEOTIDE SEQUENCE [MRNA]</scope>
    <scope>TISSUE SPECIFICITY</scope>
    <scope>GENE FAMILY</scope>
    <scope>NOMENCLATURE</scope>
</reference>
<reference key="2">
    <citation type="journal article" date="2000" name="Nature">
        <title>Sequence and analysis of chromosome 1 of the plant Arabidopsis thaliana.</title>
        <authorList>
            <person name="Theologis A."/>
            <person name="Ecker J.R."/>
            <person name="Palm C.J."/>
            <person name="Federspiel N.A."/>
            <person name="Kaul S."/>
            <person name="White O."/>
            <person name="Alonso J."/>
            <person name="Altafi H."/>
            <person name="Araujo R."/>
            <person name="Bowman C.L."/>
            <person name="Brooks S.Y."/>
            <person name="Buehler E."/>
            <person name="Chan A."/>
            <person name="Chao Q."/>
            <person name="Chen H."/>
            <person name="Cheuk R.F."/>
            <person name="Chin C.W."/>
            <person name="Chung M.K."/>
            <person name="Conn L."/>
            <person name="Conway A.B."/>
            <person name="Conway A.R."/>
            <person name="Creasy T.H."/>
            <person name="Dewar K."/>
            <person name="Dunn P."/>
            <person name="Etgu P."/>
            <person name="Feldblyum T.V."/>
            <person name="Feng J.-D."/>
            <person name="Fong B."/>
            <person name="Fujii C.Y."/>
            <person name="Gill J.E."/>
            <person name="Goldsmith A.D."/>
            <person name="Haas B."/>
            <person name="Hansen N.F."/>
            <person name="Hughes B."/>
            <person name="Huizar L."/>
            <person name="Hunter J.L."/>
            <person name="Jenkins J."/>
            <person name="Johnson-Hopson C."/>
            <person name="Khan S."/>
            <person name="Khaykin E."/>
            <person name="Kim C.J."/>
            <person name="Koo H.L."/>
            <person name="Kremenetskaia I."/>
            <person name="Kurtz D.B."/>
            <person name="Kwan A."/>
            <person name="Lam B."/>
            <person name="Langin-Hooper S."/>
            <person name="Lee A."/>
            <person name="Lee J.M."/>
            <person name="Lenz C.A."/>
            <person name="Li J.H."/>
            <person name="Li Y.-P."/>
            <person name="Lin X."/>
            <person name="Liu S.X."/>
            <person name="Liu Z.A."/>
            <person name="Luros J.S."/>
            <person name="Maiti R."/>
            <person name="Marziali A."/>
            <person name="Militscher J."/>
            <person name="Miranda M."/>
            <person name="Nguyen M."/>
            <person name="Nierman W.C."/>
            <person name="Osborne B.I."/>
            <person name="Pai G."/>
            <person name="Peterson J."/>
            <person name="Pham P.K."/>
            <person name="Rizzo M."/>
            <person name="Rooney T."/>
            <person name="Rowley D."/>
            <person name="Sakano H."/>
            <person name="Salzberg S.L."/>
            <person name="Schwartz J.R."/>
            <person name="Shinn P."/>
            <person name="Southwick A.M."/>
            <person name="Sun H."/>
            <person name="Tallon L.J."/>
            <person name="Tambunga G."/>
            <person name="Toriumi M.J."/>
            <person name="Town C.D."/>
            <person name="Utterback T."/>
            <person name="Van Aken S."/>
            <person name="Vaysberg M."/>
            <person name="Vysotskaia V.S."/>
            <person name="Walker M."/>
            <person name="Wu D."/>
            <person name="Yu G."/>
            <person name="Fraser C.M."/>
            <person name="Venter J.C."/>
            <person name="Davis R.W."/>
        </authorList>
    </citation>
    <scope>NUCLEOTIDE SEQUENCE [LARGE SCALE GENOMIC DNA]</scope>
    <source>
        <strain>cv. Columbia</strain>
    </source>
</reference>
<reference key="3">
    <citation type="journal article" date="2017" name="Plant J.">
        <title>Araport11: a complete reannotation of the Arabidopsis thaliana reference genome.</title>
        <authorList>
            <person name="Cheng C.Y."/>
            <person name="Krishnakumar V."/>
            <person name="Chan A.P."/>
            <person name="Thibaud-Nissen F."/>
            <person name="Schobel S."/>
            <person name="Town C.D."/>
        </authorList>
    </citation>
    <scope>GENOME REANNOTATION</scope>
    <source>
        <strain>cv. Columbia</strain>
    </source>
</reference>
<reference key="4">
    <citation type="journal article" date="2003" name="Science">
        <title>Empirical analysis of transcriptional activity in the Arabidopsis genome.</title>
        <authorList>
            <person name="Yamada K."/>
            <person name="Lim J."/>
            <person name="Dale J.M."/>
            <person name="Chen H."/>
            <person name="Shinn P."/>
            <person name="Palm C.J."/>
            <person name="Southwick A.M."/>
            <person name="Wu H.C."/>
            <person name="Kim C.J."/>
            <person name="Nguyen M."/>
            <person name="Pham P.K."/>
            <person name="Cheuk R.F."/>
            <person name="Karlin-Newmann G."/>
            <person name="Liu S.X."/>
            <person name="Lam B."/>
            <person name="Sakano H."/>
            <person name="Wu T."/>
            <person name="Yu G."/>
            <person name="Miranda M."/>
            <person name="Quach H.L."/>
            <person name="Tripp M."/>
            <person name="Chang C.H."/>
            <person name="Lee J.M."/>
            <person name="Toriumi M.J."/>
            <person name="Chan M.M."/>
            <person name="Tang C.C."/>
            <person name="Onodera C.S."/>
            <person name="Deng J.M."/>
            <person name="Akiyama K."/>
            <person name="Ansari Y."/>
            <person name="Arakawa T."/>
            <person name="Banh J."/>
            <person name="Banno F."/>
            <person name="Bowser L."/>
            <person name="Brooks S.Y."/>
            <person name="Carninci P."/>
            <person name="Chao Q."/>
            <person name="Choy N."/>
            <person name="Enju A."/>
            <person name="Goldsmith A.D."/>
            <person name="Gurjal M."/>
            <person name="Hansen N.F."/>
            <person name="Hayashizaki Y."/>
            <person name="Johnson-Hopson C."/>
            <person name="Hsuan V.W."/>
            <person name="Iida K."/>
            <person name="Karnes M."/>
            <person name="Khan S."/>
            <person name="Koesema E."/>
            <person name="Ishida J."/>
            <person name="Jiang P.X."/>
            <person name="Jones T."/>
            <person name="Kawai J."/>
            <person name="Kamiya A."/>
            <person name="Meyers C."/>
            <person name="Nakajima M."/>
            <person name="Narusaka M."/>
            <person name="Seki M."/>
            <person name="Sakurai T."/>
            <person name="Satou M."/>
            <person name="Tamse R."/>
            <person name="Vaysberg M."/>
            <person name="Wallender E.K."/>
            <person name="Wong C."/>
            <person name="Yamamura Y."/>
            <person name="Yuan S."/>
            <person name="Shinozaki K."/>
            <person name="Davis R.W."/>
            <person name="Theologis A."/>
            <person name="Ecker J.R."/>
        </authorList>
    </citation>
    <scope>NUCLEOTIDE SEQUENCE [LARGE SCALE MRNA]</scope>
    <source>
        <strain>cv. Columbia</strain>
    </source>
</reference>
<accession>Q93VI8</accession>
<accession>Q9MAG9</accession>
<gene>
    <name evidence="5" type="primary">TULP7</name>
    <name evidence="4" type="synonym">TLP7</name>
    <name evidence="6" type="ordered locus">At1g53320</name>
    <name evidence="7" type="ORF">F12M16.22</name>
</gene>
<dbReference type="EMBL" id="AY092403">
    <property type="protein sequence ID" value="AAM18187.1"/>
    <property type="molecule type" value="mRNA"/>
</dbReference>
<dbReference type="EMBL" id="AC008007">
    <property type="protein sequence ID" value="AAF69545.1"/>
    <property type="status" value="ALT_SEQ"/>
    <property type="molecule type" value="Genomic_DNA"/>
</dbReference>
<dbReference type="EMBL" id="CP002684">
    <property type="protein sequence ID" value="AEE32924.1"/>
    <property type="molecule type" value="Genomic_DNA"/>
</dbReference>
<dbReference type="EMBL" id="AF370146">
    <property type="protein sequence ID" value="AAK43961.1"/>
    <property type="molecule type" value="mRNA"/>
</dbReference>
<dbReference type="EMBL" id="AY059088">
    <property type="protein sequence ID" value="AAL15194.1"/>
    <property type="molecule type" value="mRNA"/>
</dbReference>
<dbReference type="RefSeq" id="NP_564627.1">
    <property type="nucleotide sequence ID" value="NM_104210.4"/>
</dbReference>
<dbReference type="SMR" id="Q93VI8"/>
<dbReference type="BioGRID" id="26991">
    <property type="interactions" value="8"/>
</dbReference>
<dbReference type="FunCoup" id="Q93VI8">
    <property type="interactions" value="767"/>
</dbReference>
<dbReference type="IntAct" id="Q93VI8">
    <property type="interactions" value="5"/>
</dbReference>
<dbReference type="STRING" id="3702.Q93VI8"/>
<dbReference type="PaxDb" id="3702-AT1G53320.1"/>
<dbReference type="ProteomicsDB" id="234308"/>
<dbReference type="EnsemblPlants" id="AT1G53320.1">
    <property type="protein sequence ID" value="AT1G53320.1"/>
    <property type="gene ID" value="AT1G53320"/>
</dbReference>
<dbReference type="GeneID" id="841766"/>
<dbReference type="Gramene" id="AT1G53320.1">
    <property type="protein sequence ID" value="AT1G53320.1"/>
    <property type="gene ID" value="AT1G53320"/>
</dbReference>
<dbReference type="KEGG" id="ath:AT1G53320"/>
<dbReference type="Araport" id="AT1G53320"/>
<dbReference type="TAIR" id="AT1G53320">
    <property type="gene designation" value="TLP7"/>
</dbReference>
<dbReference type="eggNOG" id="KOG2502">
    <property type="taxonomic scope" value="Eukaryota"/>
</dbReference>
<dbReference type="HOGENOM" id="CLU_028236_3_0_1"/>
<dbReference type="InParanoid" id="Q93VI8"/>
<dbReference type="OMA" id="MFQINED"/>
<dbReference type="OrthoDB" id="8775810at2759"/>
<dbReference type="PhylomeDB" id="Q93VI8"/>
<dbReference type="PRO" id="PR:Q93VI8"/>
<dbReference type="Proteomes" id="UP000006548">
    <property type="component" value="Chromosome 1"/>
</dbReference>
<dbReference type="ExpressionAtlas" id="Q93VI8">
    <property type="expression patterns" value="baseline and differential"/>
</dbReference>
<dbReference type="GO" id="GO:0005829">
    <property type="term" value="C:cytosol"/>
    <property type="evidence" value="ECO:0000314"/>
    <property type="project" value="TAIR"/>
</dbReference>
<dbReference type="GO" id="GO:0005634">
    <property type="term" value="C:nucleus"/>
    <property type="evidence" value="ECO:0000314"/>
    <property type="project" value="TAIR"/>
</dbReference>
<dbReference type="GO" id="GO:0005886">
    <property type="term" value="C:plasma membrane"/>
    <property type="evidence" value="ECO:0000314"/>
    <property type="project" value="TAIR"/>
</dbReference>
<dbReference type="GO" id="GO:0009536">
    <property type="term" value="C:plastid"/>
    <property type="evidence" value="ECO:0000314"/>
    <property type="project" value="TAIR"/>
</dbReference>
<dbReference type="GO" id="GO:0003700">
    <property type="term" value="F:DNA-binding transcription factor activity"/>
    <property type="evidence" value="ECO:0000250"/>
    <property type="project" value="TAIR"/>
</dbReference>
<dbReference type="GO" id="GO:0000976">
    <property type="term" value="F:transcription cis-regulatory region binding"/>
    <property type="evidence" value="ECO:0000353"/>
    <property type="project" value="TAIR"/>
</dbReference>
<dbReference type="GO" id="GO:0009555">
    <property type="term" value="P:pollen development"/>
    <property type="evidence" value="ECO:0000315"/>
    <property type="project" value="TAIR"/>
</dbReference>
<dbReference type="GO" id="GO:0006355">
    <property type="term" value="P:regulation of DNA-templated transcription"/>
    <property type="evidence" value="ECO:0000304"/>
    <property type="project" value="TAIR"/>
</dbReference>
<dbReference type="GO" id="GO:0009620">
    <property type="term" value="P:response to fungus"/>
    <property type="evidence" value="ECO:0000315"/>
    <property type="project" value="TAIR"/>
</dbReference>
<dbReference type="CDD" id="cd22153">
    <property type="entry name" value="F-box_AtTLP-like"/>
    <property type="match status" value="1"/>
</dbReference>
<dbReference type="FunFam" id="3.20.90.10:FF:000003">
    <property type="entry name" value="Tubby-like F-box protein"/>
    <property type="match status" value="1"/>
</dbReference>
<dbReference type="Gene3D" id="3.20.90.10">
    <property type="entry name" value="Tubby Protein, Chain A"/>
    <property type="match status" value="1"/>
</dbReference>
<dbReference type="InterPro" id="IPR025659">
    <property type="entry name" value="Tubby-like_C"/>
</dbReference>
<dbReference type="InterPro" id="IPR000007">
    <property type="entry name" value="Tubby_C"/>
</dbReference>
<dbReference type="InterPro" id="IPR018066">
    <property type="entry name" value="Tubby_C_CS"/>
</dbReference>
<dbReference type="PANTHER" id="PTHR16517:SF50">
    <property type="entry name" value="TUBBY-LIKE F-BOX PROTEIN 7"/>
    <property type="match status" value="1"/>
</dbReference>
<dbReference type="PANTHER" id="PTHR16517">
    <property type="entry name" value="TUBBY-RELATED"/>
    <property type="match status" value="1"/>
</dbReference>
<dbReference type="Pfam" id="PF01167">
    <property type="entry name" value="Tub"/>
    <property type="match status" value="1"/>
</dbReference>
<dbReference type="PRINTS" id="PR01573">
    <property type="entry name" value="SUPERTUBBY"/>
</dbReference>
<dbReference type="SUPFAM" id="SSF54518">
    <property type="entry name" value="Tubby C-terminal domain-like"/>
    <property type="match status" value="1"/>
</dbReference>
<dbReference type="PROSITE" id="PS01200">
    <property type="entry name" value="TUB_1"/>
    <property type="match status" value="1"/>
</dbReference>
<dbReference type="PROSITE" id="PS01201">
    <property type="entry name" value="TUB_2"/>
    <property type="match status" value="1"/>
</dbReference>
<organism>
    <name type="scientific">Arabidopsis thaliana</name>
    <name type="common">Mouse-ear cress</name>
    <dbReference type="NCBI Taxonomy" id="3702"/>
    <lineage>
        <taxon>Eukaryota</taxon>
        <taxon>Viridiplantae</taxon>
        <taxon>Streptophyta</taxon>
        <taxon>Embryophyta</taxon>
        <taxon>Tracheophyta</taxon>
        <taxon>Spermatophyta</taxon>
        <taxon>Magnoliopsida</taxon>
        <taxon>eudicotyledons</taxon>
        <taxon>Gunneridae</taxon>
        <taxon>Pentapetalae</taxon>
        <taxon>rosids</taxon>
        <taxon>malvids</taxon>
        <taxon>Brassicales</taxon>
        <taxon>Brassicaceae</taxon>
        <taxon>Camelineae</taxon>
        <taxon>Arabidopsis</taxon>
    </lineage>
</organism>
<evidence type="ECO:0000255" key="1">
    <source>
        <dbReference type="PROSITE-ProRule" id="PRU00080"/>
    </source>
</evidence>
<evidence type="ECO:0000256" key="2">
    <source>
        <dbReference type="SAM" id="MobiDB-lite"/>
    </source>
</evidence>
<evidence type="ECO:0000269" key="3">
    <source>
    </source>
</evidence>
<evidence type="ECO:0000303" key="4">
    <source>
    </source>
</evidence>
<evidence type="ECO:0000305" key="5"/>
<evidence type="ECO:0000312" key="6">
    <source>
        <dbReference type="Araport" id="AT1G53320"/>
    </source>
</evidence>
<evidence type="ECO:0000312" key="7">
    <source>
        <dbReference type="EMBL" id="AAF69545.1"/>
    </source>
</evidence>
<keyword id="KW-1185">Reference proteome</keyword>
<comment type="tissue specificity">
    <text evidence="3">Ubiquitous.</text>
</comment>
<comment type="similarity">
    <text evidence="5">Belongs to the TUB family.</text>
</comment>
<comment type="sequence caution" evidence="5">
    <conflict type="erroneous gene model prediction">
        <sequence resource="EMBL-CDS" id="AAF69545"/>
    </conflict>
</comment>
<protein>
    <recommendedName>
        <fullName evidence="4">Tubby-like F-box protein 7</fullName>
        <shortName evidence="4">AtTLP7</shortName>
    </recommendedName>
</protein>
<name>TLP7_ARATH</name>
<proteinExistence type="evidence at transcript level"/>
<feature type="chain" id="PRO_0000272235" description="Tubby-like F-box protein 7">
    <location>
        <begin position="1"/>
        <end position="379"/>
    </location>
</feature>
<feature type="domain" description="F-box" evidence="1">
    <location>
        <begin position="42"/>
        <end position="97"/>
    </location>
</feature>
<feature type="region of interest" description="Disordered" evidence="2">
    <location>
        <begin position="18"/>
        <end position="41"/>
    </location>
</feature>
<feature type="region of interest" description="Disordered" evidence="2">
    <location>
        <begin position="193"/>
        <end position="212"/>
    </location>
</feature>
<feature type="region of interest" description="Disordered" evidence="2">
    <location>
        <begin position="248"/>
        <end position="278"/>
    </location>
</feature>
<feature type="compositionally biased region" description="Polar residues" evidence="2">
    <location>
        <begin position="18"/>
        <end position="28"/>
    </location>
</feature>
<sequence>MPLSRSLLSRRISNSFRFHQGETTTAPESESIPPPSNMAGSSSWSAMLPELLGEIIRRVEETEDRWPQRRDVVTCACVSKKWREITHDFARSSLNSGKITFPSCLKLPGPRDFSNQCLIKRNKKTSTFYLYLALTPSFTDKGKFLLAARRFRTGAYTEYIISLDADDFSQGSNAYVGKLRSDFLGTNFTVYDSQPPHNGAKPSNGKASRRFASKQISPQVPAGNFEVGHVSYKFNLLKSRGPRRMVSTLRCPSPSPSSSSAGLSSDQKPCDVTKIMKKPNKDGSSLTILKNKAPRWHEHLQCWCLNFHGRVTVASVKNFQLVATVDQSQPSGKGDEETVLLQFGKVGDDTFTMDYRQPLSAFQAFAICLTSFGTKLACE</sequence>